<comment type="function">
    <text evidence="1">Catalyzes the dephosphorylation of undecaprenyl diphosphate (UPP). Confers resistance to bacitracin.</text>
</comment>
<comment type="catalytic activity">
    <reaction evidence="1">
        <text>di-trans,octa-cis-undecaprenyl diphosphate + H2O = di-trans,octa-cis-undecaprenyl phosphate + phosphate + H(+)</text>
        <dbReference type="Rhea" id="RHEA:28094"/>
        <dbReference type="ChEBI" id="CHEBI:15377"/>
        <dbReference type="ChEBI" id="CHEBI:15378"/>
        <dbReference type="ChEBI" id="CHEBI:43474"/>
        <dbReference type="ChEBI" id="CHEBI:58405"/>
        <dbReference type="ChEBI" id="CHEBI:60392"/>
        <dbReference type="EC" id="3.6.1.27"/>
    </reaction>
</comment>
<comment type="subcellular location">
    <subcellularLocation>
        <location evidence="1">Cell inner membrane</location>
        <topology evidence="1">Multi-pass membrane protein</topology>
    </subcellularLocation>
</comment>
<comment type="miscellaneous">
    <text>Bacitracin is thought to be involved in the inhibition of peptidoglycan synthesis by sequestering undecaprenyl diphosphate, thereby reducing the pool of lipid carrier available.</text>
</comment>
<comment type="similarity">
    <text evidence="1">Belongs to the UppP family.</text>
</comment>
<gene>
    <name evidence="1" type="primary">uppP</name>
    <name type="synonym">bacA</name>
    <name type="ordered locus">P9515_10391</name>
</gene>
<reference key="1">
    <citation type="journal article" date="2007" name="PLoS Genet.">
        <title>Patterns and implications of gene gain and loss in the evolution of Prochlorococcus.</title>
        <authorList>
            <person name="Kettler G.C."/>
            <person name="Martiny A.C."/>
            <person name="Huang K."/>
            <person name="Zucker J."/>
            <person name="Coleman M.L."/>
            <person name="Rodrigue S."/>
            <person name="Chen F."/>
            <person name="Lapidus A."/>
            <person name="Ferriera S."/>
            <person name="Johnson J."/>
            <person name="Steglich C."/>
            <person name="Church G.M."/>
            <person name="Richardson P."/>
            <person name="Chisholm S.W."/>
        </authorList>
    </citation>
    <scope>NUCLEOTIDE SEQUENCE [LARGE SCALE GENOMIC DNA]</scope>
    <source>
        <strain>MIT 9515</strain>
    </source>
</reference>
<proteinExistence type="inferred from homology"/>
<sequence>MDFLKFIFYGIIQGLTEFIPVSSTAHLKIISQLFGVKDPGSSLSAIIQIGSVLAIFWYFRKYIFNTINSNSKILRPSFFSNKIYKSIFIGTIPIVLIGGIVKLFVTDFSNSFFRSNFSIAVVSILMSLIMFLADISTNKFINLSNHKYRNSLFIGISQAFAIIPGVSRSGATISMALLSGWDRKDAAKFSFLLGIPSISLAAFVEFITSINEFSTFPFLPLFVGLITTFFSSLLAIDFLLKYVSSNGLKIFIYYRLVFGILIILNL</sequence>
<evidence type="ECO:0000255" key="1">
    <source>
        <dbReference type="HAMAP-Rule" id="MF_01006"/>
    </source>
</evidence>
<dbReference type="EC" id="3.6.1.27" evidence="1"/>
<dbReference type="EMBL" id="CP000552">
    <property type="protein sequence ID" value="ABM72246.1"/>
    <property type="molecule type" value="Genomic_DNA"/>
</dbReference>
<dbReference type="RefSeq" id="WP_011820347.1">
    <property type="nucleotide sequence ID" value="NC_008817.1"/>
</dbReference>
<dbReference type="SMR" id="A2BWT5"/>
<dbReference type="STRING" id="167542.P9515_10391"/>
<dbReference type="GeneID" id="60200883"/>
<dbReference type="KEGG" id="pmc:P9515_10391"/>
<dbReference type="eggNOG" id="COG1968">
    <property type="taxonomic scope" value="Bacteria"/>
</dbReference>
<dbReference type="HOGENOM" id="CLU_060296_1_0_3"/>
<dbReference type="OrthoDB" id="9808289at2"/>
<dbReference type="Proteomes" id="UP000001589">
    <property type="component" value="Chromosome"/>
</dbReference>
<dbReference type="GO" id="GO:0005886">
    <property type="term" value="C:plasma membrane"/>
    <property type="evidence" value="ECO:0007669"/>
    <property type="project" value="UniProtKB-SubCell"/>
</dbReference>
<dbReference type="GO" id="GO:0050380">
    <property type="term" value="F:undecaprenyl-diphosphatase activity"/>
    <property type="evidence" value="ECO:0007669"/>
    <property type="project" value="UniProtKB-UniRule"/>
</dbReference>
<dbReference type="GO" id="GO:0071555">
    <property type="term" value="P:cell wall organization"/>
    <property type="evidence" value="ECO:0007669"/>
    <property type="project" value="UniProtKB-KW"/>
</dbReference>
<dbReference type="GO" id="GO:0009252">
    <property type="term" value="P:peptidoglycan biosynthetic process"/>
    <property type="evidence" value="ECO:0007669"/>
    <property type="project" value="UniProtKB-KW"/>
</dbReference>
<dbReference type="GO" id="GO:0008360">
    <property type="term" value="P:regulation of cell shape"/>
    <property type="evidence" value="ECO:0007669"/>
    <property type="project" value="UniProtKB-KW"/>
</dbReference>
<dbReference type="GO" id="GO:0046677">
    <property type="term" value="P:response to antibiotic"/>
    <property type="evidence" value="ECO:0007669"/>
    <property type="project" value="UniProtKB-UniRule"/>
</dbReference>
<dbReference type="HAMAP" id="MF_01006">
    <property type="entry name" value="Undec_diphosphatase"/>
    <property type="match status" value="1"/>
</dbReference>
<dbReference type="InterPro" id="IPR003824">
    <property type="entry name" value="UppP"/>
</dbReference>
<dbReference type="PANTHER" id="PTHR30622">
    <property type="entry name" value="UNDECAPRENYL-DIPHOSPHATASE"/>
    <property type="match status" value="1"/>
</dbReference>
<dbReference type="PANTHER" id="PTHR30622:SF4">
    <property type="entry name" value="UNDECAPRENYL-DIPHOSPHATASE"/>
    <property type="match status" value="1"/>
</dbReference>
<dbReference type="Pfam" id="PF02673">
    <property type="entry name" value="BacA"/>
    <property type="match status" value="1"/>
</dbReference>
<name>UPPP_PROM5</name>
<protein>
    <recommendedName>
        <fullName evidence="1">Undecaprenyl-diphosphatase</fullName>
        <ecNumber evidence="1">3.6.1.27</ecNumber>
    </recommendedName>
    <alternativeName>
        <fullName evidence="1">Bacitracin resistance protein</fullName>
    </alternativeName>
    <alternativeName>
        <fullName evidence="1">Undecaprenyl pyrophosphate phosphatase</fullName>
    </alternativeName>
</protein>
<feature type="chain" id="PRO_0000290748" description="Undecaprenyl-diphosphatase">
    <location>
        <begin position="1"/>
        <end position="266"/>
    </location>
</feature>
<feature type="transmembrane region" description="Helical" evidence="1">
    <location>
        <begin position="1"/>
        <end position="21"/>
    </location>
</feature>
<feature type="transmembrane region" description="Helical" evidence="1">
    <location>
        <begin position="39"/>
        <end position="59"/>
    </location>
</feature>
<feature type="transmembrane region" description="Helical" evidence="1">
    <location>
        <begin position="86"/>
        <end position="106"/>
    </location>
</feature>
<feature type="transmembrane region" description="Helical" evidence="1">
    <location>
        <begin position="117"/>
        <end position="137"/>
    </location>
</feature>
<feature type="transmembrane region" description="Helical" evidence="1">
    <location>
        <begin position="153"/>
        <end position="173"/>
    </location>
</feature>
<feature type="transmembrane region" description="Helical" evidence="1">
    <location>
        <begin position="190"/>
        <end position="210"/>
    </location>
</feature>
<feature type="transmembrane region" description="Helical" evidence="1">
    <location>
        <begin position="216"/>
        <end position="236"/>
    </location>
</feature>
<feature type="transmembrane region" description="Helical" evidence="1">
    <location>
        <begin position="246"/>
        <end position="266"/>
    </location>
</feature>
<organism>
    <name type="scientific">Prochlorococcus marinus (strain MIT 9515)</name>
    <dbReference type="NCBI Taxonomy" id="167542"/>
    <lineage>
        <taxon>Bacteria</taxon>
        <taxon>Bacillati</taxon>
        <taxon>Cyanobacteriota</taxon>
        <taxon>Cyanophyceae</taxon>
        <taxon>Synechococcales</taxon>
        <taxon>Prochlorococcaceae</taxon>
        <taxon>Prochlorococcus</taxon>
    </lineage>
</organism>
<accession>A2BWT5</accession>
<keyword id="KW-0046">Antibiotic resistance</keyword>
<keyword id="KW-0997">Cell inner membrane</keyword>
<keyword id="KW-1003">Cell membrane</keyword>
<keyword id="KW-0133">Cell shape</keyword>
<keyword id="KW-0961">Cell wall biogenesis/degradation</keyword>
<keyword id="KW-0378">Hydrolase</keyword>
<keyword id="KW-0472">Membrane</keyword>
<keyword id="KW-0573">Peptidoglycan synthesis</keyword>
<keyword id="KW-0812">Transmembrane</keyword>
<keyword id="KW-1133">Transmembrane helix</keyword>